<reference key="1">
    <citation type="journal article" date="2008" name="J. Bacteriol.">
        <title>Complete genome sequence of the mosquitocidal bacterium Bacillus sphaericus C3-41 and comparison with those of closely related Bacillus species.</title>
        <authorList>
            <person name="Hu X."/>
            <person name="Fan W."/>
            <person name="Han B."/>
            <person name="Liu H."/>
            <person name="Zheng D."/>
            <person name="Li Q."/>
            <person name="Dong W."/>
            <person name="Yan J."/>
            <person name="Gao M."/>
            <person name="Berry C."/>
            <person name="Yuan Z."/>
        </authorList>
    </citation>
    <scope>NUCLEOTIDE SEQUENCE [LARGE SCALE GENOMIC DNA]</scope>
    <source>
        <strain>C3-41</strain>
    </source>
</reference>
<organism>
    <name type="scientific">Lysinibacillus sphaericus (strain C3-41)</name>
    <dbReference type="NCBI Taxonomy" id="444177"/>
    <lineage>
        <taxon>Bacteria</taxon>
        <taxon>Bacillati</taxon>
        <taxon>Bacillota</taxon>
        <taxon>Bacilli</taxon>
        <taxon>Bacillales</taxon>
        <taxon>Bacillaceae</taxon>
        <taxon>Lysinibacillus</taxon>
    </lineage>
</organism>
<comment type="function">
    <text evidence="1">Catalyzes the conversion of 1-hydroxy-2-methyl-2-(E)-butenyl 4-diphosphate (HMBPP) into a mixture of isopentenyl diphosphate (IPP) and dimethylallyl diphosphate (DMAPP). Acts in the terminal step of the DOXP/MEP pathway for isoprenoid precursor biosynthesis.</text>
</comment>
<comment type="catalytic activity">
    <reaction evidence="1">
        <text>isopentenyl diphosphate + 2 oxidized [2Fe-2S]-[ferredoxin] + H2O = (2E)-4-hydroxy-3-methylbut-2-enyl diphosphate + 2 reduced [2Fe-2S]-[ferredoxin] + 2 H(+)</text>
        <dbReference type="Rhea" id="RHEA:24488"/>
        <dbReference type="Rhea" id="RHEA-COMP:10000"/>
        <dbReference type="Rhea" id="RHEA-COMP:10001"/>
        <dbReference type="ChEBI" id="CHEBI:15377"/>
        <dbReference type="ChEBI" id="CHEBI:15378"/>
        <dbReference type="ChEBI" id="CHEBI:33737"/>
        <dbReference type="ChEBI" id="CHEBI:33738"/>
        <dbReference type="ChEBI" id="CHEBI:128753"/>
        <dbReference type="ChEBI" id="CHEBI:128769"/>
        <dbReference type="EC" id="1.17.7.4"/>
    </reaction>
</comment>
<comment type="catalytic activity">
    <reaction evidence="1">
        <text>dimethylallyl diphosphate + 2 oxidized [2Fe-2S]-[ferredoxin] + H2O = (2E)-4-hydroxy-3-methylbut-2-enyl diphosphate + 2 reduced [2Fe-2S]-[ferredoxin] + 2 H(+)</text>
        <dbReference type="Rhea" id="RHEA:24825"/>
        <dbReference type="Rhea" id="RHEA-COMP:10000"/>
        <dbReference type="Rhea" id="RHEA-COMP:10001"/>
        <dbReference type="ChEBI" id="CHEBI:15377"/>
        <dbReference type="ChEBI" id="CHEBI:15378"/>
        <dbReference type="ChEBI" id="CHEBI:33737"/>
        <dbReference type="ChEBI" id="CHEBI:33738"/>
        <dbReference type="ChEBI" id="CHEBI:57623"/>
        <dbReference type="ChEBI" id="CHEBI:128753"/>
        <dbReference type="EC" id="1.17.7.4"/>
    </reaction>
</comment>
<comment type="cofactor">
    <cofactor evidence="1">
        <name>[4Fe-4S] cluster</name>
        <dbReference type="ChEBI" id="CHEBI:49883"/>
    </cofactor>
    <text evidence="1">Binds 1 [4Fe-4S] cluster per subunit.</text>
</comment>
<comment type="pathway">
    <text evidence="1">Isoprenoid biosynthesis; dimethylallyl diphosphate biosynthesis; dimethylallyl diphosphate from (2E)-4-hydroxy-3-methylbutenyl diphosphate: step 1/1.</text>
</comment>
<comment type="pathway">
    <text evidence="1">Isoprenoid biosynthesis; isopentenyl diphosphate biosynthesis via DXP pathway; isopentenyl diphosphate from 1-deoxy-D-xylulose 5-phosphate: step 6/6.</text>
</comment>
<comment type="similarity">
    <text evidence="1">Belongs to the IspH family.</text>
</comment>
<name>ISPH_LYSSC</name>
<protein>
    <recommendedName>
        <fullName evidence="1">4-hydroxy-3-methylbut-2-enyl diphosphate reductase</fullName>
        <shortName evidence="1">HMBPP reductase</shortName>
        <ecNumber evidence="1">1.17.7.4</ecNumber>
    </recommendedName>
</protein>
<gene>
    <name evidence="1" type="primary">ispH</name>
    <name type="ordered locus">Bsph_3685</name>
</gene>
<feature type="chain" id="PRO_1000098956" description="4-hydroxy-3-methylbut-2-enyl diphosphate reductase">
    <location>
        <begin position="1"/>
        <end position="323"/>
    </location>
</feature>
<feature type="active site" description="Proton donor" evidence="1">
    <location>
        <position position="133"/>
    </location>
</feature>
<feature type="binding site" evidence="1">
    <location>
        <position position="12"/>
    </location>
    <ligand>
        <name>[4Fe-4S] cluster</name>
        <dbReference type="ChEBI" id="CHEBI:49883"/>
    </ligand>
</feature>
<feature type="binding site" evidence="1">
    <location>
        <position position="43"/>
    </location>
    <ligand>
        <name>(2E)-4-hydroxy-3-methylbut-2-enyl diphosphate</name>
        <dbReference type="ChEBI" id="CHEBI:128753"/>
    </ligand>
</feature>
<feature type="binding site" evidence="1">
    <location>
        <position position="43"/>
    </location>
    <ligand>
        <name>dimethylallyl diphosphate</name>
        <dbReference type="ChEBI" id="CHEBI:57623"/>
    </ligand>
</feature>
<feature type="binding site" evidence="1">
    <location>
        <position position="43"/>
    </location>
    <ligand>
        <name>isopentenyl diphosphate</name>
        <dbReference type="ChEBI" id="CHEBI:128769"/>
    </ligand>
</feature>
<feature type="binding site" evidence="1">
    <location>
        <position position="81"/>
    </location>
    <ligand>
        <name>(2E)-4-hydroxy-3-methylbut-2-enyl diphosphate</name>
        <dbReference type="ChEBI" id="CHEBI:128753"/>
    </ligand>
</feature>
<feature type="binding site" evidence="1">
    <location>
        <position position="81"/>
    </location>
    <ligand>
        <name>dimethylallyl diphosphate</name>
        <dbReference type="ChEBI" id="CHEBI:57623"/>
    </ligand>
</feature>
<feature type="binding site" evidence="1">
    <location>
        <position position="81"/>
    </location>
    <ligand>
        <name>isopentenyl diphosphate</name>
        <dbReference type="ChEBI" id="CHEBI:128769"/>
    </ligand>
</feature>
<feature type="binding site" evidence="1">
    <location>
        <position position="103"/>
    </location>
    <ligand>
        <name>[4Fe-4S] cluster</name>
        <dbReference type="ChEBI" id="CHEBI:49883"/>
    </ligand>
</feature>
<feature type="binding site" evidence="1">
    <location>
        <position position="131"/>
    </location>
    <ligand>
        <name>(2E)-4-hydroxy-3-methylbut-2-enyl diphosphate</name>
        <dbReference type="ChEBI" id="CHEBI:128753"/>
    </ligand>
</feature>
<feature type="binding site" evidence="1">
    <location>
        <position position="131"/>
    </location>
    <ligand>
        <name>dimethylallyl diphosphate</name>
        <dbReference type="ChEBI" id="CHEBI:57623"/>
    </ligand>
</feature>
<feature type="binding site" evidence="1">
    <location>
        <position position="131"/>
    </location>
    <ligand>
        <name>isopentenyl diphosphate</name>
        <dbReference type="ChEBI" id="CHEBI:128769"/>
    </ligand>
</feature>
<feature type="binding site" evidence="1">
    <location>
        <position position="170"/>
    </location>
    <ligand>
        <name>(2E)-4-hydroxy-3-methylbut-2-enyl diphosphate</name>
        <dbReference type="ChEBI" id="CHEBI:128753"/>
    </ligand>
</feature>
<feature type="binding site" evidence="1">
    <location>
        <position position="198"/>
    </location>
    <ligand>
        <name>[4Fe-4S] cluster</name>
        <dbReference type="ChEBI" id="CHEBI:49883"/>
    </ligand>
</feature>
<feature type="binding site" evidence="1">
    <location>
        <position position="226"/>
    </location>
    <ligand>
        <name>(2E)-4-hydroxy-3-methylbut-2-enyl diphosphate</name>
        <dbReference type="ChEBI" id="CHEBI:128753"/>
    </ligand>
</feature>
<feature type="binding site" evidence="1">
    <location>
        <position position="226"/>
    </location>
    <ligand>
        <name>dimethylallyl diphosphate</name>
        <dbReference type="ChEBI" id="CHEBI:57623"/>
    </ligand>
</feature>
<feature type="binding site" evidence="1">
    <location>
        <position position="226"/>
    </location>
    <ligand>
        <name>isopentenyl diphosphate</name>
        <dbReference type="ChEBI" id="CHEBI:128769"/>
    </ligand>
</feature>
<feature type="binding site" evidence="1">
    <location>
        <position position="228"/>
    </location>
    <ligand>
        <name>(2E)-4-hydroxy-3-methylbut-2-enyl diphosphate</name>
        <dbReference type="ChEBI" id="CHEBI:128753"/>
    </ligand>
</feature>
<feature type="binding site" evidence="1">
    <location>
        <position position="228"/>
    </location>
    <ligand>
        <name>dimethylallyl diphosphate</name>
        <dbReference type="ChEBI" id="CHEBI:57623"/>
    </ligand>
</feature>
<feature type="binding site" evidence="1">
    <location>
        <position position="228"/>
    </location>
    <ligand>
        <name>isopentenyl diphosphate</name>
        <dbReference type="ChEBI" id="CHEBI:128769"/>
    </ligand>
</feature>
<feature type="binding site" evidence="1">
    <location>
        <position position="271"/>
    </location>
    <ligand>
        <name>(2E)-4-hydroxy-3-methylbut-2-enyl diphosphate</name>
        <dbReference type="ChEBI" id="CHEBI:128753"/>
    </ligand>
</feature>
<feature type="binding site" evidence="1">
    <location>
        <position position="271"/>
    </location>
    <ligand>
        <name>dimethylallyl diphosphate</name>
        <dbReference type="ChEBI" id="CHEBI:57623"/>
    </ligand>
</feature>
<feature type="binding site" evidence="1">
    <location>
        <position position="271"/>
    </location>
    <ligand>
        <name>isopentenyl diphosphate</name>
        <dbReference type="ChEBI" id="CHEBI:128769"/>
    </ligand>
</feature>
<proteinExistence type="inferred from homology"/>
<evidence type="ECO:0000255" key="1">
    <source>
        <dbReference type="HAMAP-Rule" id="MF_00191"/>
    </source>
</evidence>
<keyword id="KW-0004">4Fe-4S</keyword>
<keyword id="KW-0408">Iron</keyword>
<keyword id="KW-0411">Iron-sulfur</keyword>
<keyword id="KW-0414">Isoprene biosynthesis</keyword>
<keyword id="KW-0479">Metal-binding</keyword>
<keyword id="KW-0560">Oxidoreductase</keyword>
<dbReference type="EC" id="1.17.7.4" evidence="1"/>
<dbReference type="EMBL" id="CP000817">
    <property type="protein sequence ID" value="ACA41169.1"/>
    <property type="molecule type" value="Genomic_DNA"/>
</dbReference>
<dbReference type="RefSeq" id="WP_012295225.1">
    <property type="nucleotide sequence ID" value="NC_010382.1"/>
</dbReference>
<dbReference type="SMR" id="B1HTG5"/>
<dbReference type="EnsemblBacteria" id="ACA41169">
    <property type="protein sequence ID" value="ACA41169"/>
    <property type="gene ID" value="Bsph_3685"/>
</dbReference>
<dbReference type="KEGG" id="lsp:Bsph_3685"/>
<dbReference type="HOGENOM" id="CLU_027486_0_0_9"/>
<dbReference type="UniPathway" id="UPA00056">
    <property type="reaction ID" value="UER00097"/>
</dbReference>
<dbReference type="UniPathway" id="UPA00059">
    <property type="reaction ID" value="UER00105"/>
</dbReference>
<dbReference type="Proteomes" id="UP000002164">
    <property type="component" value="Chromosome"/>
</dbReference>
<dbReference type="GO" id="GO:0051539">
    <property type="term" value="F:4 iron, 4 sulfur cluster binding"/>
    <property type="evidence" value="ECO:0007669"/>
    <property type="project" value="UniProtKB-UniRule"/>
</dbReference>
<dbReference type="GO" id="GO:0051745">
    <property type="term" value="F:4-hydroxy-3-methylbut-2-enyl diphosphate reductase activity"/>
    <property type="evidence" value="ECO:0007669"/>
    <property type="project" value="UniProtKB-UniRule"/>
</dbReference>
<dbReference type="GO" id="GO:0046872">
    <property type="term" value="F:metal ion binding"/>
    <property type="evidence" value="ECO:0007669"/>
    <property type="project" value="UniProtKB-KW"/>
</dbReference>
<dbReference type="GO" id="GO:0050992">
    <property type="term" value="P:dimethylallyl diphosphate biosynthetic process"/>
    <property type="evidence" value="ECO:0007669"/>
    <property type="project" value="UniProtKB-UniRule"/>
</dbReference>
<dbReference type="GO" id="GO:0019288">
    <property type="term" value="P:isopentenyl diphosphate biosynthetic process, methylerythritol 4-phosphate pathway"/>
    <property type="evidence" value="ECO:0007669"/>
    <property type="project" value="UniProtKB-UniRule"/>
</dbReference>
<dbReference type="GO" id="GO:0016114">
    <property type="term" value="P:terpenoid biosynthetic process"/>
    <property type="evidence" value="ECO:0007669"/>
    <property type="project" value="UniProtKB-UniRule"/>
</dbReference>
<dbReference type="CDD" id="cd13944">
    <property type="entry name" value="lytB_ispH"/>
    <property type="match status" value="1"/>
</dbReference>
<dbReference type="Gene3D" id="3.40.50.11270">
    <property type="match status" value="1"/>
</dbReference>
<dbReference type="Gene3D" id="3.40.1010.20">
    <property type="entry name" value="4-hydroxy-3-methylbut-2-enyl diphosphate reductase, catalytic domain"/>
    <property type="match status" value="2"/>
</dbReference>
<dbReference type="HAMAP" id="MF_00191">
    <property type="entry name" value="IspH"/>
    <property type="match status" value="1"/>
</dbReference>
<dbReference type="InterPro" id="IPR003451">
    <property type="entry name" value="LytB/IspH"/>
</dbReference>
<dbReference type="NCBIfam" id="TIGR00216">
    <property type="entry name" value="ispH_lytB"/>
    <property type="match status" value="1"/>
</dbReference>
<dbReference type="NCBIfam" id="NF002187">
    <property type="entry name" value="PRK01045.1-1"/>
    <property type="match status" value="1"/>
</dbReference>
<dbReference type="PANTHER" id="PTHR30426">
    <property type="entry name" value="4-HYDROXY-3-METHYLBUT-2-ENYL DIPHOSPHATE REDUCTASE"/>
    <property type="match status" value="1"/>
</dbReference>
<dbReference type="PANTHER" id="PTHR30426:SF0">
    <property type="entry name" value="4-HYDROXY-3-METHYLBUT-2-ENYL DIPHOSPHATE REDUCTASE"/>
    <property type="match status" value="1"/>
</dbReference>
<dbReference type="Pfam" id="PF02401">
    <property type="entry name" value="LYTB"/>
    <property type="match status" value="1"/>
</dbReference>
<accession>B1HTG5</accession>
<sequence>MQVLKINPRGYCYGVVDAMVIARNAALDKTLPRPIYILGMIVHNKHVTDAFEEDGIITLDGDNRLEIIEQVESGTVIFTAHGVSPEIRDIAKRKGLVSIDATCPDVTVTHDLIREKSAEGYDIIYIGKKGHPEPEGAIGVAPDHVHLVQSSNDIDSLNLTNDKLLVTNQTTMSQWDVAHLMDSLKEKFPHIEVHKEICLATQVRQEAVAQQAGEADLLIVVGDPKSNNSNRLTQVSVEIAGTPSYRIADVSELKIDWLKGINKVAVTAGASTPTPIVKEVISFLDQFDENDPSTHVIKRTVTLDKILPKIKTPKPVDKIMPHK</sequence>